<keyword id="KW-0002">3D-structure</keyword>
<keyword id="KW-1003">Cell membrane</keyword>
<keyword id="KW-1015">Disulfide bond</keyword>
<keyword id="KW-0325">Glycoprotein</keyword>
<keyword id="KW-0336">GPI-anchor</keyword>
<keyword id="KW-0449">Lipoprotein</keyword>
<keyword id="KW-0472">Membrane</keyword>
<keyword id="KW-0732">Signal</keyword>
<keyword id="KW-0821">Trypanosomiasis</keyword>
<protein>
    <recommendedName>
        <fullName>Variant surface glycoprotein MITAT 1.2</fullName>
    </recommendedName>
    <alternativeName>
        <fullName>VSG 221</fullName>
    </alternativeName>
</protein>
<dbReference type="EMBL" id="X56762">
    <property type="protein sequence ID" value="CAA40081.1"/>
    <property type="molecule type" value="mRNA"/>
</dbReference>
<dbReference type="EMBL" id="K00640">
    <property type="protein sequence ID" value="AAA30276.1"/>
    <property type="molecule type" value="mRNA"/>
</dbReference>
<dbReference type="EMBL" id="K01290">
    <property type="protein sequence ID" value="AAA30275.1"/>
    <property type="molecule type" value="Genomic_DNA"/>
</dbReference>
<dbReference type="EMBL" id="K00641">
    <property type="protein sequence ID" value="AAA30277.1"/>
    <property type="molecule type" value="mRNA"/>
</dbReference>
<dbReference type="PIR" id="S18451">
    <property type="entry name" value="S18451"/>
</dbReference>
<dbReference type="PDB" id="1VSG">
    <property type="method" value="X-ray"/>
    <property type="resolution" value="2.90 A"/>
    <property type="chains" value="A/B=27-390"/>
</dbReference>
<dbReference type="PDB" id="1XU6">
    <property type="method" value="NMR"/>
    <property type="chains" value="A=385-459"/>
</dbReference>
<dbReference type="PDB" id="7AQX">
    <property type="method" value="X-ray"/>
    <property type="resolution" value="1.50 A"/>
    <property type="chains" value="A/B=27-390"/>
</dbReference>
<dbReference type="PDB" id="7AQY">
    <property type="method" value="X-ray"/>
    <property type="resolution" value="1.90 A"/>
    <property type="chains" value="A/B=27-390"/>
</dbReference>
<dbReference type="PDB" id="7AQZ">
    <property type="method" value="X-ray"/>
    <property type="resolution" value="1.30 A"/>
    <property type="chains" value="A/B=27-390"/>
</dbReference>
<dbReference type="PDB" id="7AR0">
    <property type="method" value="X-ray"/>
    <property type="resolution" value="2.14 A"/>
    <property type="chains" value="A=27-390"/>
</dbReference>
<dbReference type="PDB" id="7P56">
    <property type="method" value="X-ray"/>
    <property type="resolution" value="1.74 A"/>
    <property type="chains" value="A/B=1-476"/>
</dbReference>
<dbReference type="PDB" id="7P57">
    <property type="method" value="X-ray"/>
    <property type="resolution" value="1.96 A"/>
    <property type="chains" value="A=1-476"/>
</dbReference>
<dbReference type="PDBsum" id="1VSG"/>
<dbReference type="PDBsum" id="1XU6"/>
<dbReference type="PDBsum" id="7AQX"/>
<dbReference type="PDBsum" id="7AQY"/>
<dbReference type="PDBsum" id="7AQZ"/>
<dbReference type="PDBsum" id="7AR0"/>
<dbReference type="PDBsum" id="7P56"/>
<dbReference type="PDBsum" id="7P57"/>
<dbReference type="SMR" id="P26332"/>
<dbReference type="EvolutionaryTrace" id="P26332"/>
<dbReference type="GO" id="GO:0005886">
    <property type="term" value="C:plasma membrane"/>
    <property type="evidence" value="ECO:0007669"/>
    <property type="project" value="UniProtKB-SubCell"/>
</dbReference>
<dbReference type="GO" id="GO:0098552">
    <property type="term" value="C:side of membrane"/>
    <property type="evidence" value="ECO:0007669"/>
    <property type="project" value="UniProtKB-KW"/>
</dbReference>
<dbReference type="GO" id="GO:0042783">
    <property type="term" value="P:symbiont-mediated evasion of host immune response"/>
    <property type="evidence" value="ECO:0007669"/>
    <property type="project" value="InterPro"/>
</dbReference>
<dbReference type="FunFam" id="3.90.150.10:FF:000001">
    <property type="entry name" value="Variant surface glycoprotein (VSG), putative"/>
    <property type="match status" value="1"/>
</dbReference>
<dbReference type="Gene3D" id="4.10.110.20">
    <property type="entry name" value="Variant surface glycoprotein MITAT 1.2, VSG 221, C-terminal domain"/>
    <property type="match status" value="1"/>
</dbReference>
<dbReference type="Gene3D" id="3.90.150.10">
    <property type="entry name" value="Variant Surface Glycoprotein, subunit A domain 1"/>
    <property type="match status" value="1"/>
</dbReference>
<dbReference type="Gene3D" id="1.10.470.10">
    <property type="entry name" value="Variant Surface Glycoprotein, subunit A, domain 2"/>
    <property type="match status" value="1"/>
</dbReference>
<dbReference type="InterPro" id="IPR001812">
    <property type="entry name" value="Trypano_VSG_A_N_dom"/>
</dbReference>
<dbReference type="InterPro" id="IPR027446">
    <property type="entry name" value="VSG_C_dom_sf"/>
</dbReference>
<dbReference type="Pfam" id="PF00913">
    <property type="entry name" value="Trypan_glycop"/>
    <property type="match status" value="1"/>
</dbReference>
<dbReference type="SUPFAM" id="SSF58087">
    <property type="entry name" value="Variant surface glycoprotein (N-terminal domain)"/>
    <property type="match status" value="1"/>
</dbReference>
<dbReference type="SUPFAM" id="SSF118251">
    <property type="entry name" value="Variant surface glycoprotein MITAT 1.2, VSG 221, C-terminal domain"/>
    <property type="match status" value="1"/>
</dbReference>
<sequence>MPSNQEARLFLAVLVLAQVLPILVDSAAEKGFKQAFWQPLCQVSEELDDQPKGALFTLQAAASKIQKMRDAALRASIYAEINHGTNRAKAAVIVANHYAMKADSGLEALKQTLSSQEVTATATASYLKGRIDEYLNLLLQTKESGTSGCMMDTSGTNTVTKAGGTIGGVPCKLQLSPIQPKRPAATYLGKAGYVGLTRQADAANNFHDNDAECRLASGHNTNGLGKSGQLSAAVTMAAGYVTVANSQTAVTVQALDALQEASGAAHQPWIDAWKAKKALTGAETAEFRNETAGIAGKTGVTKLVEEALLKKKDSEASEIQTELKKYFSGHENEQWTAIEKLISEQPVAQNLVGDNQPTKLGELEGNAKLTTILAYYRMETAGKFEVLTQKHKPAESQQQAAETEGSCNKKDQNECKSPCKWHNDAENKKCTLDKEEAKKVADETAKDGKTGNTNTTGSSNSFVISKTPLWLAVLLF</sequence>
<proteinExistence type="evidence at protein level"/>
<comment type="function">
    <text>VSG forms a coat on the surface of the parasite. The trypanosome evades the immune response of the host by expressing a series of antigenically distinct VSGs from an estimated 1000 VSG genes.</text>
</comment>
<comment type="subunit">
    <text>Homodimer.</text>
</comment>
<comment type="subcellular location">
    <subcellularLocation>
        <location>Cell membrane</location>
        <topology>Lipid-anchor</topology>
        <topology>GPI-anchor</topology>
    </subcellularLocation>
    <text evidence="1">A soluble form is released from ruptured cells by the action of a PI-PLC.</text>
</comment>
<reference key="1">
    <citation type="journal article" date="1991" name="J. Mol. Biol.">
        <title>Variant specific glycoprotein of Trypanosoma brucei consists of two domains each having an independently conserved pattern of cysteine residues.</title>
        <authorList>
            <person name="Carrington M."/>
            <person name="Miller N."/>
            <person name="Blum M.L."/>
            <person name="Roditi I."/>
            <person name="Wiley D.C."/>
            <person name="Turner M.J."/>
        </authorList>
    </citation>
    <scope>NUCLEOTIDE SEQUENCE [MRNA]</scope>
    <source>
        <strain>Isolate MIAG 221</strain>
    </source>
</reference>
<reference key="2">
    <citation type="journal article" date="1981" name="Nucleic Acids Res.">
        <title>Variant surface glycoproteins of Trypanosoma brucei are synthesised with cleavable hydrophobic sequences at the carboxy and amino termini.</title>
        <authorList>
            <person name="Boothroyd J.C."/>
            <person name="Paynter C.A."/>
            <person name="Cross G.A.M."/>
            <person name="Bernards A."/>
            <person name="Borst P."/>
        </authorList>
    </citation>
    <scope>NUCLEOTIDE SEQUENCE [MRNA] OF 1-59 AND 452-476</scope>
</reference>
<reference key="3">
    <citation type="journal article" date="1984" name="Cell">
        <title>Two modes of activation of a single surface antigen gene of Trypanosoma brucei.</title>
        <authorList>
            <person name="Bernards A."/>
            <person name="de Lange T."/>
            <person name="Michels P.A.M."/>
            <person name="Liu A.Y.C."/>
            <person name="Huisman M.J."/>
            <person name="Borst P."/>
        </authorList>
    </citation>
    <scope>NUCLEOTIDE SEQUENCE [GENOMIC DNA] OF 1-28</scope>
</reference>
<reference key="4">
    <citation type="journal article" date="1990" name="J. Mol. Biol.">
        <title>2.9-A resolution structure of the N-terminal domain of a variant surface glycoprotein from Trypanosoma brucei.</title>
        <authorList>
            <person name="Freymann D."/>
            <person name="Down J."/>
            <person name="Carrington M."/>
            <person name="Roditi I."/>
            <person name="Turner M.J."/>
            <person name="Wiley D.C."/>
        </authorList>
    </citation>
    <scope>X-RAY CRYSTALLOGRAPHY (2.9 ANGSTROMS) OF 27-390</scope>
</reference>
<reference key="5">
    <citation type="journal article" date="2005" name="J. Biol. Chem.">
        <title>Structure of the C-terminal domain from Trypanosoma brucei variant surface glycoprotein MITat1.2.</title>
        <authorList>
            <person name="Chattopadhyay A."/>
            <person name="Jones N.G."/>
            <person name="Nietlispach D."/>
            <person name="Nielsen P.R."/>
            <person name="Voorheis H.P."/>
            <person name="Mott H.R."/>
            <person name="Carrington M."/>
        </authorList>
    </citation>
    <scope>STRUCTURE BY NMR OF 385-459</scope>
    <scope>DISULFIDE BONDS</scope>
</reference>
<organism>
    <name type="scientific">Trypanosoma brucei brucei</name>
    <dbReference type="NCBI Taxonomy" id="5702"/>
    <lineage>
        <taxon>Eukaryota</taxon>
        <taxon>Discoba</taxon>
        <taxon>Euglenozoa</taxon>
        <taxon>Kinetoplastea</taxon>
        <taxon>Metakinetoplastina</taxon>
        <taxon>Trypanosomatida</taxon>
        <taxon>Trypanosomatidae</taxon>
        <taxon>Trypanosoma</taxon>
    </lineage>
</organism>
<feature type="signal peptide">
    <location>
        <begin position="1"/>
        <end position="26"/>
    </location>
</feature>
<feature type="chain" id="PRO_0000036433" description="Variant surface glycoprotein MITAT 1.2">
    <location>
        <begin position="27"/>
        <end position="459"/>
    </location>
</feature>
<feature type="propeptide" id="PRO_0000036434" description="Removed in mature form" evidence="2">
    <location>
        <begin position="460"/>
        <end position="476"/>
    </location>
</feature>
<feature type="region of interest" description="Disordered" evidence="3">
    <location>
        <begin position="389"/>
        <end position="418"/>
    </location>
</feature>
<feature type="region of interest" description="Disordered" evidence="3">
    <location>
        <begin position="435"/>
        <end position="459"/>
    </location>
</feature>
<feature type="compositionally biased region" description="Basic and acidic residues" evidence="3">
    <location>
        <begin position="435"/>
        <end position="449"/>
    </location>
</feature>
<feature type="compositionally biased region" description="Low complexity" evidence="3">
    <location>
        <begin position="450"/>
        <end position="459"/>
    </location>
</feature>
<feature type="lipid moiety-binding region" description="GPI-anchor amidated serine" evidence="2">
    <location>
        <position position="459"/>
    </location>
</feature>
<feature type="glycosylation site" description="N-linked (GlcNAc...) asparagine">
    <location>
        <position position="289"/>
    </location>
</feature>
<feature type="glycosylation site" description="N-linked (GlcNAc...) asparagine" evidence="2">
    <location>
        <position position="454"/>
    </location>
</feature>
<feature type="disulfide bond" evidence="4">
    <location>
        <begin position="41"/>
        <end position="171"/>
    </location>
</feature>
<feature type="disulfide bond" evidence="4">
    <location>
        <begin position="149"/>
        <end position="213"/>
    </location>
</feature>
<feature type="disulfide bond" evidence="4">
    <location>
        <begin position="407"/>
        <end position="419"/>
    </location>
</feature>
<feature type="disulfide bond" evidence="4">
    <location>
        <begin position="415"/>
        <end position="430"/>
    </location>
</feature>
<feature type="strand" evidence="8">
    <location>
        <begin position="30"/>
        <end position="32"/>
    </location>
</feature>
<feature type="helix" evidence="8">
    <location>
        <begin position="34"/>
        <end position="47"/>
    </location>
</feature>
<feature type="helix" evidence="8">
    <location>
        <begin position="50"/>
        <end position="82"/>
    </location>
</feature>
<feature type="helix" evidence="8">
    <location>
        <begin position="86"/>
        <end position="111"/>
    </location>
</feature>
<feature type="helix" evidence="8">
    <location>
        <begin position="113"/>
        <end position="140"/>
    </location>
</feature>
<feature type="strand" evidence="8">
    <location>
        <begin position="142"/>
        <end position="144"/>
    </location>
</feature>
<feature type="strand" evidence="8">
    <location>
        <begin position="147"/>
        <end position="151"/>
    </location>
</feature>
<feature type="strand" evidence="8">
    <location>
        <begin position="155"/>
        <end position="158"/>
    </location>
</feature>
<feature type="strand" evidence="8">
    <location>
        <begin position="186"/>
        <end position="188"/>
    </location>
</feature>
<feature type="strand" evidence="8">
    <location>
        <begin position="190"/>
        <end position="192"/>
    </location>
</feature>
<feature type="helix" evidence="8">
    <location>
        <begin position="202"/>
        <end position="205"/>
    </location>
</feature>
<feature type="strand" evidence="8">
    <location>
        <begin position="207"/>
        <end position="212"/>
    </location>
</feature>
<feature type="helix" evidence="8">
    <location>
        <begin position="214"/>
        <end position="216"/>
    </location>
</feature>
<feature type="turn" evidence="8">
    <location>
        <begin position="220"/>
        <end position="222"/>
    </location>
</feature>
<feature type="strand" evidence="8">
    <location>
        <begin position="226"/>
        <end position="228"/>
    </location>
</feature>
<feature type="strand" evidence="8">
    <location>
        <begin position="234"/>
        <end position="236"/>
    </location>
</feature>
<feature type="turn" evidence="8">
    <location>
        <begin position="237"/>
        <end position="240"/>
    </location>
</feature>
<feature type="strand" evidence="8">
    <location>
        <begin position="241"/>
        <end position="243"/>
    </location>
</feature>
<feature type="strand" evidence="8">
    <location>
        <begin position="245"/>
        <end position="248"/>
    </location>
</feature>
<feature type="helix" evidence="8">
    <location>
        <begin position="267"/>
        <end position="277"/>
    </location>
</feature>
<feature type="helix" evidence="9">
    <location>
        <begin position="281"/>
        <end position="283"/>
    </location>
</feature>
<feature type="helix" evidence="8">
    <location>
        <begin position="285"/>
        <end position="287"/>
    </location>
</feature>
<feature type="helix" evidence="9">
    <location>
        <begin position="294"/>
        <end position="296"/>
    </location>
</feature>
<feature type="strand" evidence="5">
    <location>
        <begin position="297"/>
        <end position="299"/>
    </location>
</feature>
<feature type="helix" evidence="8">
    <location>
        <begin position="300"/>
        <end position="307"/>
    </location>
</feature>
<feature type="helix" evidence="8">
    <location>
        <begin position="316"/>
        <end position="327"/>
    </location>
</feature>
<feature type="strand" evidence="8">
    <location>
        <begin position="328"/>
        <end position="331"/>
    </location>
</feature>
<feature type="helix" evidence="8">
    <location>
        <begin position="332"/>
        <end position="344"/>
    </location>
</feature>
<feature type="helix" evidence="8">
    <location>
        <begin position="349"/>
        <end position="351"/>
    </location>
</feature>
<feature type="strand" evidence="7">
    <location>
        <begin position="354"/>
        <end position="356"/>
    </location>
</feature>
<feature type="helix" evidence="8">
    <location>
        <begin position="360"/>
        <end position="362"/>
    </location>
</feature>
<feature type="helix" evidence="8">
    <location>
        <begin position="366"/>
        <end position="387"/>
    </location>
</feature>
<feature type="helix" evidence="6">
    <location>
        <begin position="404"/>
        <end position="409"/>
    </location>
</feature>
<feature type="turn" evidence="6">
    <location>
        <begin position="412"/>
        <end position="414"/>
    </location>
</feature>
<feature type="strand" evidence="6">
    <location>
        <begin position="425"/>
        <end position="427"/>
    </location>
</feature>
<feature type="helix" evidence="6">
    <location>
        <begin position="434"/>
        <end position="441"/>
    </location>
</feature>
<feature type="strand" evidence="6">
    <location>
        <begin position="443"/>
        <end position="447"/>
    </location>
</feature>
<feature type="strand" evidence="6">
    <location>
        <begin position="454"/>
        <end position="457"/>
    </location>
</feature>
<evidence type="ECO:0000250" key="1"/>
<evidence type="ECO:0000255" key="2"/>
<evidence type="ECO:0000256" key="3">
    <source>
        <dbReference type="SAM" id="MobiDB-lite"/>
    </source>
</evidence>
<evidence type="ECO:0000269" key="4">
    <source>
    </source>
</evidence>
<evidence type="ECO:0007829" key="5">
    <source>
        <dbReference type="PDB" id="1VSG"/>
    </source>
</evidence>
<evidence type="ECO:0007829" key="6">
    <source>
        <dbReference type="PDB" id="1XU6"/>
    </source>
</evidence>
<evidence type="ECO:0007829" key="7">
    <source>
        <dbReference type="PDB" id="7AQY"/>
    </source>
</evidence>
<evidence type="ECO:0007829" key="8">
    <source>
        <dbReference type="PDB" id="7AQZ"/>
    </source>
</evidence>
<evidence type="ECO:0007829" key="9">
    <source>
        <dbReference type="PDB" id="7P56"/>
    </source>
</evidence>
<accession>P26332</accession>
<name>VSM2_TRYBB</name>